<name>RSMH_MESH7</name>
<reference key="1">
    <citation type="journal article" date="2005" name="J. Bacteriol.">
        <title>Swine and poultry pathogens: the complete genome sequences of two strains of Mycoplasma hyopneumoniae and a strain of Mycoplasma synoviae.</title>
        <authorList>
            <person name="Vasconcelos A.T.R."/>
            <person name="Ferreira H.B."/>
            <person name="Bizarro C.V."/>
            <person name="Bonatto S.L."/>
            <person name="Carvalho M.O."/>
            <person name="Pinto P.M."/>
            <person name="Almeida D.F."/>
            <person name="Almeida L.G.P."/>
            <person name="Almeida R."/>
            <person name="Alves-Junior L."/>
            <person name="Assuncao E.N."/>
            <person name="Azevedo V.A.C."/>
            <person name="Bogo M.R."/>
            <person name="Brigido M.M."/>
            <person name="Brocchi M."/>
            <person name="Burity H.A."/>
            <person name="Camargo A.A."/>
            <person name="Camargo S.S."/>
            <person name="Carepo M.S."/>
            <person name="Carraro D.M."/>
            <person name="de Mattos Cascardo J.C."/>
            <person name="Castro L.A."/>
            <person name="Cavalcanti G."/>
            <person name="Chemale G."/>
            <person name="Collevatti R.G."/>
            <person name="Cunha C.W."/>
            <person name="Dallagiovanna B."/>
            <person name="Dambros B.P."/>
            <person name="Dellagostin O.A."/>
            <person name="Falcao C."/>
            <person name="Fantinatti-Garboggini F."/>
            <person name="Felipe M.S.S."/>
            <person name="Fiorentin L."/>
            <person name="Franco G.R."/>
            <person name="Freitas N.S.A."/>
            <person name="Frias D."/>
            <person name="Grangeiro T.B."/>
            <person name="Grisard E.C."/>
            <person name="Guimaraes C.T."/>
            <person name="Hungria M."/>
            <person name="Jardim S.N."/>
            <person name="Krieger M.A."/>
            <person name="Laurino J.P."/>
            <person name="Lima L.F.A."/>
            <person name="Lopes M.I."/>
            <person name="Loreto E.L.S."/>
            <person name="Madeira H.M.F."/>
            <person name="Manfio G.P."/>
            <person name="Maranhao A.Q."/>
            <person name="Martinkovics C.T."/>
            <person name="Medeiros S.R.B."/>
            <person name="Moreira M.A.M."/>
            <person name="Neiva M."/>
            <person name="Ramalho-Neto C.E."/>
            <person name="Nicolas M.F."/>
            <person name="Oliveira S.C."/>
            <person name="Paixao R.F.C."/>
            <person name="Pedrosa F.O."/>
            <person name="Pena S.D.J."/>
            <person name="Pereira M."/>
            <person name="Pereira-Ferrari L."/>
            <person name="Piffer I."/>
            <person name="Pinto L.S."/>
            <person name="Potrich D.P."/>
            <person name="Salim A.C.M."/>
            <person name="Santos F.R."/>
            <person name="Schmitt R."/>
            <person name="Schneider M.P.C."/>
            <person name="Schrank A."/>
            <person name="Schrank I.S."/>
            <person name="Schuck A.F."/>
            <person name="Seuanez H.N."/>
            <person name="Silva D.W."/>
            <person name="Silva R."/>
            <person name="Silva S.C."/>
            <person name="Soares C.M.A."/>
            <person name="Souza K.R.L."/>
            <person name="Souza R.C."/>
            <person name="Staats C.C."/>
            <person name="Steffens M.B.R."/>
            <person name="Teixeira S.M.R."/>
            <person name="Urmenyi T.P."/>
            <person name="Vainstein M.H."/>
            <person name="Zuccherato L.W."/>
            <person name="Simpson A.J.G."/>
            <person name="Zaha A."/>
        </authorList>
    </citation>
    <scope>NUCLEOTIDE SEQUENCE [LARGE SCALE GENOMIC DNA]</scope>
    <source>
        <strain>7448</strain>
    </source>
</reference>
<comment type="function">
    <text evidence="1">Specifically methylates the N4 position of cytidine in position 1402 (C1402) of 16S rRNA.</text>
</comment>
<comment type="catalytic activity">
    <reaction evidence="1">
        <text>cytidine(1402) in 16S rRNA + S-adenosyl-L-methionine = N(4)-methylcytidine(1402) in 16S rRNA + S-adenosyl-L-homocysteine + H(+)</text>
        <dbReference type="Rhea" id="RHEA:42928"/>
        <dbReference type="Rhea" id="RHEA-COMP:10286"/>
        <dbReference type="Rhea" id="RHEA-COMP:10287"/>
        <dbReference type="ChEBI" id="CHEBI:15378"/>
        <dbReference type="ChEBI" id="CHEBI:57856"/>
        <dbReference type="ChEBI" id="CHEBI:59789"/>
        <dbReference type="ChEBI" id="CHEBI:74506"/>
        <dbReference type="ChEBI" id="CHEBI:82748"/>
        <dbReference type="EC" id="2.1.1.199"/>
    </reaction>
</comment>
<comment type="subcellular location">
    <subcellularLocation>
        <location evidence="1">Cytoplasm</location>
    </subcellularLocation>
</comment>
<comment type="similarity">
    <text evidence="1">Belongs to the methyltransferase superfamily. RsmH family.</text>
</comment>
<dbReference type="EC" id="2.1.1.199" evidence="1"/>
<dbReference type="EMBL" id="AE017244">
    <property type="protein sequence ID" value="AAZ53761.1"/>
    <property type="molecule type" value="Genomic_DNA"/>
</dbReference>
<dbReference type="RefSeq" id="WP_011284163.1">
    <property type="nucleotide sequence ID" value="NC_007332.1"/>
</dbReference>
<dbReference type="SMR" id="Q4A7X8"/>
<dbReference type="GeneID" id="41334706"/>
<dbReference type="KEGG" id="mhp:MHP7448_0392"/>
<dbReference type="HOGENOM" id="CLU_038422_2_0_14"/>
<dbReference type="Proteomes" id="UP000000553">
    <property type="component" value="Chromosome"/>
</dbReference>
<dbReference type="GO" id="GO:0005737">
    <property type="term" value="C:cytoplasm"/>
    <property type="evidence" value="ECO:0007669"/>
    <property type="project" value="UniProtKB-SubCell"/>
</dbReference>
<dbReference type="GO" id="GO:0071424">
    <property type="term" value="F:rRNA (cytosine-N4-)-methyltransferase activity"/>
    <property type="evidence" value="ECO:0007669"/>
    <property type="project" value="UniProtKB-UniRule"/>
</dbReference>
<dbReference type="GO" id="GO:0070475">
    <property type="term" value="P:rRNA base methylation"/>
    <property type="evidence" value="ECO:0007669"/>
    <property type="project" value="UniProtKB-UniRule"/>
</dbReference>
<dbReference type="Gene3D" id="1.10.150.170">
    <property type="entry name" value="Putative methyltransferase TM0872, insert domain"/>
    <property type="match status" value="1"/>
</dbReference>
<dbReference type="Gene3D" id="3.40.50.150">
    <property type="entry name" value="Vaccinia Virus protein VP39"/>
    <property type="match status" value="1"/>
</dbReference>
<dbReference type="HAMAP" id="MF_01007">
    <property type="entry name" value="16SrRNA_methyltr_H"/>
    <property type="match status" value="1"/>
</dbReference>
<dbReference type="InterPro" id="IPR002903">
    <property type="entry name" value="RsmH"/>
</dbReference>
<dbReference type="InterPro" id="IPR023397">
    <property type="entry name" value="SAM-dep_MeTrfase_MraW_recog"/>
</dbReference>
<dbReference type="InterPro" id="IPR029063">
    <property type="entry name" value="SAM-dependent_MTases_sf"/>
</dbReference>
<dbReference type="NCBIfam" id="TIGR00006">
    <property type="entry name" value="16S rRNA (cytosine(1402)-N(4))-methyltransferase RsmH"/>
    <property type="match status" value="1"/>
</dbReference>
<dbReference type="PANTHER" id="PTHR11265:SF0">
    <property type="entry name" value="12S RRNA N4-METHYLCYTIDINE METHYLTRANSFERASE"/>
    <property type="match status" value="1"/>
</dbReference>
<dbReference type="PANTHER" id="PTHR11265">
    <property type="entry name" value="S-ADENOSYL-METHYLTRANSFERASE MRAW"/>
    <property type="match status" value="1"/>
</dbReference>
<dbReference type="Pfam" id="PF01795">
    <property type="entry name" value="Methyltransf_5"/>
    <property type="match status" value="1"/>
</dbReference>
<dbReference type="PIRSF" id="PIRSF004486">
    <property type="entry name" value="MraW"/>
    <property type="match status" value="1"/>
</dbReference>
<dbReference type="SUPFAM" id="SSF81799">
    <property type="entry name" value="Putative methyltransferase TM0872, insert domain"/>
    <property type="match status" value="1"/>
</dbReference>
<dbReference type="SUPFAM" id="SSF53335">
    <property type="entry name" value="S-adenosyl-L-methionine-dependent methyltransferases"/>
    <property type="match status" value="1"/>
</dbReference>
<evidence type="ECO:0000255" key="1">
    <source>
        <dbReference type="HAMAP-Rule" id="MF_01007"/>
    </source>
</evidence>
<feature type="chain" id="PRO_0000223546" description="Ribosomal RNA small subunit methyltransferase H">
    <location>
        <begin position="1"/>
        <end position="296"/>
    </location>
</feature>
<feature type="binding site" evidence="1">
    <location>
        <begin position="30"/>
        <end position="32"/>
    </location>
    <ligand>
        <name>S-adenosyl-L-methionine</name>
        <dbReference type="ChEBI" id="CHEBI:59789"/>
    </ligand>
</feature>
<feature type="binding site" evidence="1">
    <location>
        <position position="49"/>
    </location>
    <ligand>
        <name>S-adenosyl-L-methionine</name>
        <dbReference type="ChEBI" id="CHEBI:59789"/>
    </ligand>
</feature>
<feature type="binding site" evidence="1">
    <location>
        <position position="76"/>
    </location>
    <ligand>
        <name>S-adenosyl-L-methionine</name>
        <dbReference type="ChEBI" id="CHEBI:59789"/>
    </ligand>
</feature>
<feature type="binding site" evidence="1">
    <location>
        <position position="97"/>
    </location>
    <ligand>
        <name>S-adenosyl-L-methionine</name>
        <dbReference type="ChEBI" id="CHEBI:59789"/>
    </ligand>
</feature>
<feature type="binding site" evidence="1">
    <location>
        <position position="104"/>
    </location>
    <ligand>
        <name>S-adenosyl-L-methionine</name>
        <dbReference type="ChEBI" id="CHEBI:59789"/>
    </ligand>
</feature>
<sequence length="296" mass="34148">MHVPVLLEELILALEINPKGFYVDLTLGRGGHSLAILEKISNGKLVVFDKDQDALDQTRPKLLAYKQNIEIIWSDFSRFDFYLENLGIQFVDGFIIDLGVSSPQIDDPERGFSYSKDGNLDMRMDKSQKLSAFIVLNEYPYEKLVEIFFKYGQIPYAREIARAIINSRPLKTTFELVNLVKKVIPALVLVKKNFIKNVFQAVRIEVNNELDSLQKLLEKLPKFLKQGSKVAIITFHSLEDRIVKKAFLDLIRKDKLEFFQKGLPKFSMKVFRPKANELKSNPRAKSAKLRLLLKNR</sequence>
<accession>Q4A7X8</accession>
<protein>
    <recommendedName>
        <fullName evidence="1">Ribosomal RNA small subunit methyltransferase H</fullName>
        <ecNumber evidence="1">2.1.1.199</ecNumber>
    </recommendedName>
    <alternativeName>
        <fullName evidence="1">16S rRNA m(4)C1402 methyltransferase</fullName>
    </alternativeName>
    <alternativeName>
        <fullName evidence="1">rRNA (cytosine-N(4)-)-methyltransferase RsmH</fullName>
    </alternativeName>
</protein>
<keyword id="KW-0963">Cytoplasm</keyword>
<keyword id="KW-0489">Methyltransferase</keyword>
<keyword id="KW-0698">rRNA processing</keyword>
<keyword id="KW-0949">S-adenosyl-L-methionine</keyword>
<keyword id="KW-0808">Transferase</keyword>
<organism>
    <name type="scientific">Mesomycoplasma hyopneumoniae (strain 7448)</name>
    <name type="common">Mycoplasma hyopneumoniae</name>
    <dbReference type="NCBI Taxonomy" id="262722"/>
    <lineage>
        <taxon>Bacteria</taxon>
        <taxon>Bacillati</taxon>
        <taxon>Mycoplasmatota</taxon>
        <taxon>Mycoplasmoidales</taxon>
        <taxon>Metamycoplasmataceae</taxon>
        <taxon>Mesomycoplasma</taxon>
    </lineage>
</organism>
<proteinExistence type="inferred from homology"/>
<gene>
    <name evidence="1" type="primary">rsmH</name>
    <name type="synonym">mraW</name>
    <name type="ordered locus">MHP7448_0392</name>
</gene>